<sequence>MRHYEIVILVHPDQSSQVPAMVERYQSMIKEKDGKVHRLEDWGRRQLAYSIDKVHKAHYLLMNIESDQGVISELENAFRYNDAVIRSLILKRDHAITKSSLIMQGAEKGKSSSKKVAAEAEASEEA</sequence>
<feature type="chain" id="PRO_1000079440" description="Small ribosomal subunit protein bS6">
    <location>
        <begin position="1"/>
        <end position="126"/>
    </location>
</feature>
<feature type="region of interest" description="Disordered" evidence="2">
    <location>
        <begin position="104"/>
        <end position="126"/>
    </location>
</feature>
<organism>
    <name type="scientific">Coxiella burnetii (strain Dugway 5J108-111)</name>
    <dbReference type="NCBI Taxonomy" id="434922"/>
    <lineage>
        <taxon>Bacteria</taxon>
        <taxon>Pseudomonadati</taxon>
        <taxon>Pseudomonadota</taxon>
        <taxon>Gammaproteobacteria</taxon>
        <taxon>Legionellales</taxon>
        <taxon>Coxiellaceae</taxon>
        <taxon>Coxiella</taxon>
    </lineage>
</organism>
<gene>
    <name evidence="1" type="primary">rpsF</name>
    <name type="ordered locus">CBUD_0927</name>
</gene>
<comment type="function">
    <text evidence="1">Binds together with bS18 to 16S ribosomal RNA.</text>
</comment>
<comment type="similarity">
    <text evidence="1">Belongs to the bacterial ribosomal protein bS6 family.</text>
</comment>
<keyword id="KW-0687">Ribonucleoprotein</keyword>
<keyword id="KW-0689">Ribosomal protein</keyword>
<keyword id="KW-0694">RNA-binding</keyword>
<keyword id="KW-0699">rRNA-binding</keyword>
<reference key="1">
    <citation type="journal article" date="2009" name="Infect. Immun.">
        <title>Comparative genomics reveal extensive transposon-mediated genomic plasticity and diversity among potential effector proteins within the genus Coxiella.</title>
        <authorList>
            <person name="Beare P.A."/>
            <person name="Unsworth N."/>
            <person name="Andoh M."/>
            <person name="Voth D.E."/>
            <person name="Omsland A."/>
            <person name="Gilk S.D."/>
            <person name="Williams K.P."/>
            <person name="Sobral B.W."/>
            <person name="Kupko J.J. III"/>
            <person name="Porcella S.F."/>
            <person name="Samuel J.E."/>
            <person name="Heinzen R.A."/>
        </authorList>
    </citation>
    <scope>NUCLEOTIDE SEQUENCE [LARGE SCALE GENOMIC DNA]</scope>
    <source>
        <strain>Dugway 5J108-111</strain>
    </source>
</reference>
<proteinExistence type="inferred from homology"/>
<protein>
    <recommendedName>
        <fullName evidence="1">Small ribosomal subunit protein bS6</fullName>
    </recommendedName>
    <alternativeName>
        <fullName evidence="3">30S ribosomal protein S6</fullName>
    </alternativeName>
</protein>
<dbReference type="EMBL" id="CP000733">
    <property type="protein sequence ID" value="ABS77129.1"/>
    <property type="molecule type" value="Genomic_DNA"/>
</dbReference>
<dbReference type="RefSeq" id="WP_011996834.1">
    <property type="nucleotide sequence ID" value="NC_009727.1"/>
</dbReference>
<dbReference type="SMR" id="A9KFL5"/>
<dbReference type="KEGG" id="cbd:CBUD_0927"/>
<dbReference type="HOGENOM" id="CLU_113441_6_1_6"/>
<dbReference type="Proteomes" id="UP000008555">
    <property type="component" value="Chromosome"/>
</dbReference>
<dbReference type="GO" id="GO:0022627">
    <property type="term" value="C:cytosolic small ribosomal subunit"/>
    <property type="evidence" value="ECO:0007669"/>
    <property type="project" value="TreeGrafter"/>
</dbReference>
<dbReference type="GO" id="GO:0070181">
    <property type="term" value="F:small ribosomal subunit rRNA binding"/>
    <property type="evidence" value="ECO:0007669"/>
    <property type="project" value="TreeGrafter"/>
</dbReference>
<dbReference type="GO" id="GO:0003735">
    <property type="term" value="F:structural constituent of ribosome"/>
    <property type="evidence" value="ECO:0007669"/>
    <property type="project" value="InterPro"/>
</dbReference>
<dbReference type="GO" id="GO:0006412">
    <property type="term" value="P:translation"/>
    <property type="evidence" value="ECO:0007669"/>
    <property type="project" value="UniProtKB-UniRule"/>
</dbReference>
<dbReference type="CDD" id="cd00473">
    <property type="entry name" value="bS6"/>
    <property type="match status" value="1"/>
</dbReference>
<dbReference type="FunFam" id="3.30.70.60:FF:000003">
    <property type="entry name" value="30S ribosomal protein S6"/>
    <property type="match status" value="1"/>
</dbReference>
<dbReference type="Gene3D" id="3.30.70.60">
    <property type="match status" value="1"/>
</dbReference>
<dbReference type="HAMAP" id="MF_00360">
    <property type="entry name" value="Ribosomal_bS6"/>
    <property type="match status" value="1"/>
</dbReference>
<dbReference type="InterPro" id="IPR000529">
    <property type="entry name" value="Ribosomal_bS6"/>
</dbReference>
<dbReference type="InterPro" id="IPR035980">
    <property type="entry name" value="Ribosomal_bS6_sf"/>
</dbReference>
<dbReference type="InterPro" id="IPR020814">
    <property type="entry name" value="Ribosomal_S6_plastid/chlpt"/>
</dbReference>
<dbReference type="InterPro" id="IPR014717">
    <property type="entry name" value="Transl_elong_EF1B/ribsomal_bS6"/>
</dbReference>
<dbReference type="NCBIfam" id="TIGR00166">
    <property type="entry name" value="S6"/>
    <property type="match status" value="1"/>
</dbReference>
<dbReference type="PANTHER" id="PTHR21011">
    <property type="entry name" value="MITOCHONDRIAL 28S RIBOSOMAL PROTEIN S6"/>
    <property type="match status" value="1"/>
</dbReference>
<dbReference type="PANTHER" id="PTHR21011:SF1">
    <property type="entry name" value="SMALL RIBOSOMAL SUBUNIT PROTEIN BS6M"/>
    <property type="match status" value="1"/>
</dbReference>
<dbReference type="Pfam" id="PF01250">
    <property type="entry name" value="Ribosomal_S6"/>
    <property type="match status" value="1"/>
</dbReference>
<dbReference type="SUPFAM" id="SSF54995">
    <property type="entry name" value="Ribosomal protein S6"/>
    <property type="match status" value="1"/>
</dbReference>
<name>RS6_COXBN</name>
<accession>A9KFL5</accession>
<evidence type="ECO:0000255" key="1">
    <source>
        <dbReference type="HAMAP-Rule" id="MF_00360"/>
    </source>
</evidence>
<evidence type="ECO:0000256" key="2">
    <source>
        <dbReference type="SAM" id="MobiDB-lite"/>
    </source>
</evidence>
<evidence type="ECO:0000305" key="3"/>